<reference key="1">
    <citation type="journal article" date="2009" name="J. Bacteriol.">
        <title>Complete genome sequence of the extremophilic Bacillus cereus strain Q1 with industrial applications.</title>
        <authorList>
            <person name="Xiong Z."/>
            <person name="Jiang Y."/>
            <person name="Qi D."/>
            <person name="Lu H."/>
            <person name="Yang F."/>
            <person name="Yang J."/>
            <person name="Chen L."/>
            <person name="Sun L."/>
            <person name="Xu X."/>
            <person name="Xue Y."/>
            <person name="Zhu Y."/>
            <person name="Jin Q."/>
        </authorList>
    </citation>
    <scope>NUCLEOTIDE SEQUENCE [LARGE SCALE GENOMIC DNA]</scope>
    <source>
        <strain>Q1</strain>
    </source>
</reference>
<dbReference type="EMBL" id="CP000227">
    <property type="protein sequence ID" value="ACM15681.1"/>
    <property type="molecule type" value="Genomic_DNA"/>
</dbReference>
<dbReference type="KEGG" id="bcq:BCQ_5281"/>
<dbReference type="HOGENOM" id="CLU_082099_1_0_9"/>
<dbReference type="Proteomes" id="UP000000441">
    <property type="component" value="Chromosome"/>
</dbReference>
<dbReference type="GO" id="GO:0005886">
    <property type="term" value="C:plasma membrane"/>
    <property type="evidence" value="ECO:0007669"/>
    <property type="project" value="UniProtKB-SubCell"/>
</dbReference>
<dbReference type="GO" id="GO:0019835">
    <property type="term" value="P:cytolysis"/>
    <property type="evidence" value="ECO:0007669"/>
    <property type="project" value="UniProtKB-UniRule"/>
</dbReference>
<dbReference type="GO" id="GO:0031640">
    <property type="term" value="P:killing of cells of another organism"/>
    <property type="evidence" value="ECO:0007669"/>
    <property type="project" value="UniProtKB-KW"/>
</dbReference>
<dbReference type="GO" id="GO:0012501">
    <property type="term" value="P:programmed cell death"/>
    <property type="evidence" value="ECO:0007669"/>
    <property type="project" value="UniProtKB-UniRule"/>
</dbReference>
<dbReference type="HAMAP" id="MF_01142">
    <property type="entry name" value="LrgB"/>
    <property type="match status" value="1"/>
</dbReference>
<dbReference type="InterPro" id="IPR024891">
    <property type="entry name" value="Antiholin-like_LrgB"/>
</dbReference>
<dbReference type="InterPro" id="IPR007300">
    <property type="entry name" value="CidB/LrgB"/>
</dbReference>
<dbReference type="NCBIfam" id="NF003291">
    <property type="entry name" value="PRK04288.1"/>
    <property type="match status" value="1"/>
</dbReference>
<dbReference type="PANTHER" id="PTHR30249:SF0">
    <property type="entry name" value="PLASTIDAL GLYCOLATE_GLYCERATE TRANSLOCATOR 1, CHLOROPLASTIC"/>
    <property type="match status" value="1"/>
</dbReference>
<dbReference type="PANTHER" id="PTHR30249">
    <property type="entry name" value="PUTATIVE SEROTONIN TRANSPORTER"/>
    <property type="match status" value="1"/>
</dbReference>
<dbReference type="Pfam" id="PF04172">
    <property type="entry name" value="LrgB"/>
    <property type="match status" value="1"/>
</dbReference>
<proteinExistence type="inferred from homology"/>
<comment type="function">
    <text evidence="1">Inhibits the expression or activity of extracellular murein hydrolases by interacting, possibly with LrgA, with the holin-like protein CidA. The LrgAB and CidA proteins may affect the proton motive force of the membrane. May be involved in programmed cell death (PCD), possibly triggering PCD in response to antibiotics and environmental stresses.</text>
</comment>
<comment type="subcellular location">
    <subcellularLocation>
        <location evidence="1">Cell membrane</location>
        <topology evidence="1">Multi-pass membrane protein</topology>
    </subcellularLocation>
</comment>
<comment type="similarity">
    <text evidence="1">Belongs to the CidB/LrgB family. LrgB subfamily.</text>
</comment>
<keyword id="KW-1003">Cell membrane</keyword>
<keyword id="KW-0204">Cytolysis</keyword>
<keyword id="KW-0472">Membrane</keyword>
<keyword id="KW-0812">Transmembrane</keyword>
<keyword id="KW-1133">Transmembrane helix</keyword>
<sequence>MASTMTPYFGIVVSLIAYGIGTLLFKHSKGFFLFTPLFVAMVLGIVFLKVGNFTFEEYNTGGKMISFFLEPATIAFAIPLYKQVDKLKKYWWQILSAIVVGSICSVIVVFIVAKAIGLDTAVMNSMLPQAATTAIALPISESIGGIPAITSFAVIFNAVIVYALGALFLKTFRVKHPIAKGLALGTAGHALGVAVGIEMGEVEAAMASIAVTVVGVVTVVVIPMFMPFIG</sequence>
<gene>
    <name evidence="1" type="primary">lrgB</name>
    <name type="ordered locus">BCQ_5281</name>
</gene>
<feature type="chain" id="PRO_1000164103" description="Antiholin-like protein LrgB">
    <location>
        <begin position="1"/>
        <end position="230"/>
    </location>
</feature>
<feature type="transmembrane region" description="Helical" evidence="1">
    <location>
        <begin position="5"/>
        <end position="25"/>
    </location>
</feature>
<feature type="transmembrane region" description="Helical" evidence="1">
    <location>
        <begin position="30"/>
        <end position="50"/>
    </location>
</feature>
<feature type="transmembrane region" description="Helical" evidence="1">
    <location>
        <begin position="61"/>
        <end position="81"/>
    </location>
</feature>
<feature type="transmembrane region" description="Helical" evidence="1">
    <location>
        <begin position="92"/>
        <end position="112"/>
    </location>
</feature>
<feature type="transmembrane region" description="Helical" evidence="1">
    <location>
        <begin position="149"/>
        <end position="169"/>
    </location>
</feature>
<feature type="transmembrane region" description="Helical" evidence="1">
    <location>
        <begin position="177"/>
        <end position="197"/>
    </location>
</feature>
<feature type="transmembrane region" description="Helical" evidence="1">
    <location>
        <begin position="209"/>
        <end position="229"/>
    </location>
</feature>
<name>LRGB_BACCQ</name>
<accession>B9ISZ3</accession>
<evidence type="ECO:0000255" key="1">
    <source>
        <dbReference type="HAMAP-Rule" id="MF_01142"/>
    </source>
</evidence>
<organism>
    <name type="scientific">Bacillus cereus (strain Q1)</name>
    <dbReference type="NCBI Taxonomy" id="361100"/>
    <lineage>
        <taxon>Bacteria</taxon>
        <taxon>Bacillati</taxon>
        <taxon>Bacillota</taxon>
        <taxon>Bacilli</taxon>
        <taxon>Bacillales</taxon>
        <taxon>Bacillaceae</taxon>
        <taxon>Bacillus</taxon>
        <taxon>Bacillus cereus group</taxon>
    </lineage>
</organism>
<protein>
    <recommendedName>
        <fullName evidence="1">Antiholin-like protein LrgB</fullName>
    </recommendedName>
</protein>